<protein>
    <recommendedName>
        <fullName>Zinc finger protein 639</fullName>
    </recommendedName>
</protein>
<keyword id="KW-0238">DNA-binding</keyword>
<keyword id="KW-1017">Isopeptide bond</keyword>
<keyword id="KW-0479">Metal-binding</keyword>
<keyword id="KW-0539">Nucleus</keyword>
<keyword id="KW-0597">Phosphoprotein</keyword>
<keyword id="KW-1185">Reference proteome</keyword>
<keyword id="KW-0677">Repeat</keyword>
<keyword id="KW-0678">Repressor</keyword>
<keyword id="KW-0804">Transcription</keyword>
<keyword id="KW-0805">Transcription regulation</keyword>
<keyword id="KW-0832">Ubl conjugation</keyword>
<keyword id="KW-0862">Zinc</keyword>
<keyword id="KW-0863">Zinc-finger</keyword>
<dbReference type="EMBL" id="BC087704">
    <property type="protein sequence ID" value="AAH87704.1"/>
    <property type="molecule type" value="mRNA"/>
</dbReference>
<dbReference type="RefSeq" id="NP_001074376.1">
    <property type="nucleotide sequence ID" value="NM_001080907.2"/>
</dbReference>
<dbReference type="RefSeq" id="XP_006232316.1">
    <property type="nucleotide sequence ID" value="XM_006232254.2"/>
</dbReference>
<dbReference type="RefSeq" id="XP_008759164.1">
    <property type="nucleotide sequence ID" value="XM_008760942.1"/>
</dbReference>
<dbReference type="RefSeq" id="XP_008759165.1">
    <property type="nucleotide sequence ID" value="XM_008760943.1"/>
</dbReference>
<dbReference type="SMR" id="Q5PPG4"/>
<dbReference type="FunCoup" id="Q5PPG4">
    <property type="interactions" value="2485"/>
</dbReference>
<dbReference type="STRING" id="10116.ENSRNOP00000062807"/>
<dbReference type="iPTMnet" id="Q5PPG4"/>
<dbReference type="PhosphoSitePlus" id="Q5PPG4"/>
<dbReference type="PaxDb" id="10116-ENSRNOP00000062807"/>
<dbReference type="Ensembl" id="ENSRNOT00000065518.4">
    <property type="protein sequence ID" value="ENSRNOP00000062807.2"/>
    <property type="gene ID" value="ENSRNOG00000043053.4"/>
</dbReference>
<dbReference type="GeneID" id="683504"/>
<dbReference type="KEGG" id="rno:683504"/>
<dbReference type="UCSC" id="RGD:1585689">
    <property type="organism name" value="rat"/>
</dbReference>
<dbReference type="AGR" id="RGD:1585689"/>
<dbReference type="CTD" id="67778"/>
<dbReference type="RGD" id="1585689">
    <property type="gene designation" value="LOC683504"/>
</dbReference>
<dbReference type="eggNOG" id="KOG1721">
    <property type="taxonomic scope" value="Eukaryota"/>
</dbReference>
<dbReference type="GeneTree" id="ENSGT00940000156335"/>
<dbReference type="HOGENOM" id="CLU_569800_0_0_1"/>
<dbReference type="InParanoid" id="Q5PPG4"/>
<dbReference type="OrthoDB" id="6077919at2759"/>
<dbReference type="PhylomeDB" id="Q5PPG4"/>
<dbReference type="PRO" id="PR:Q5PPG4"/>
<dbReference type="Proteomes" id="UP000002494">
    <property type="component" value="Chromosome 2"/>
</dbReference>
<dbReference type="Bgee" id="ENSRNOG00000043053">
    <property type="expression patterns" value="Expressed in skeletal muscle tissue and 19 other cell types or tissues"/>
</dbReference>
<dbReference type="GO" id="GO:0005654">
    <property type="term" value="C:nucleoplasm"/>
    <property type="evidence" value="ECO:0007669"/>
    <property type="project" value="Ensembl"/>
</dbReference>
<dbReference type="GO" id="GO:0005634">
    <property type="term" value="C:nucleus"/>
    <property type="evidence" value="ECO:0000250"/>
    <property type="project" value="UniProtKB"/>
</dbReference>
<dbReference type="GO" id="GO:0001228">
    <property type="term" value="F:DNA-binding transcription activator activity, RNA polymerase II-specific"/>
    <property type="evidence" value="ECO:0000266"/>
    <property type="project" value="RGD"/>
</dbReference>
<dbReference type="GO" id="GO:0003700">
    <property type="term" value="F:DNA-binding transcription factor activity"/>
    <property type="evidence" value="ECO:0000250"/>
    <property type="project" value="UniProtKB"/>
</dbReference>
<dbReference type="GO" id="GO:0000978">
    <property type="term" value="F:RNA polymerase II cis-regulatory region sequence-specific DNA binding"/>
    <property type="evidence" value="ECO:0000266"/>
    <property type="project" value="RGD"/>
</dbReference>
<dbReference type="GO" id="GO:0000976">
    <property type="term" value="F:transcription cis-regulatory region binding"/>
    <property type="evidence" value="ECO:0000250"/>
    <property type="project" value="UniProtKB"/>
</dbReference>
<dbReference type="GO" id="GO:0008270">
    <property type="term" value="F:zinc ion binding"/>
    <property type="evidence" value="ECO:0007669"/>
    <property type="project" value="UniProtKB-KW"/>
</dbReference>
<dbReference type="GO" id="GO:0043922">
    <property type="term" value="P:negative regulation by host of viral transcription"/>
    <property type="evidence" value="ECO:0000250"/>
    <property type="project" value="UniProtKB"/>
</dbReference>
<dbReference type="GO" id="GO:0045892">
    <property type="term" value="P:negative regulation of DNA-templated transcription"/>
    <property type="evidence" value="ECO:0000250"/>
    <property type="project" value="UniProtKB"/>
</dbReference>
<dbReference type="GO" id="GO:0043923">
    <property type="term" value="P:positive regulation by host of viral transcription"/>
    <property type="evidence" value="ECO:0000250"/>
    <property type="project" value="UniProtKB"/>
</dbReference>
<dbReference type="GO" id="GO:0030307">
    <property type="term" value="P:positive regulation of cell growth"/>
    <property type="evidence" value="ECO:0000250"/>
    <property type="project" value="UniProtKB"/>
</dbReference>
<dbReference type="GO" id="GO:0045944">
    <property type="term" value="P:positive regulation of transcription by RNA polymerase II"/>
    <property type="evidence" value="ECO:0000266"/>
    <property type="project" value="RGD"/>
</dbReference>
<dbReference type="GO" id="GO:0006357">
    <property type="term" value="P:regulation of transcription by RNA polymerase II"/>
    <property type="evidence" value="ECO:0000318"/>
    <property type="project" value="GO_Central"/>
</dbReference>
<dbReference type="GO" id="GO:0046718">
    <property type="term" value="P:symbiont entry into host cell"/>
    <property type="evidence" value="ECO:0000250"/>
    <property type="project" value="UniProtKB"/>
</dbReference>
<dbReference type="FunFam" id="3.30.160.60:FF:000776">
    <property type="entry name" value="Zinc finger protein 639"/>
    <property type="match status" value="1"/>
</dbReference>
<dbReference type="FunFam" id="3.30.160.60:FF:001103">
    <property type="entry name" value="Zinc finger protein 639"/>
    <property type="match status" value="1"/>
</dbReference>
<dbReference type="FunFam" id="3.30.160.60:FF:001200">
    <property type="entry name" value="zinc finger protein 639"/>
    <property type="match status" value="1"/>
</dbReference>
<dbReference type="FunFam" id="3.30.160.60:FF:001222">
    <property type="entry name" value="zinc finger protein 639"/>
    <property type="match status" value="1"/>
</dbReference>
<dbReference type="Gene3D" id="3.30.160.60">
    <property type="entry name" value="Classic Zinc Finger"/>
    <property type="match status" value="4"/>
</dbReference>
<dbReference type="InterPro" id="IPR036236">
    <property type="entry name" value="Znf_C2H2_sf"/>
</dbReference>
<dbReference type="InterPro" id="IPR013087">
    <property type="entry name" value="Znf_C2H2_type"/>
</dbReference>
<dbReference type="PANTHER" id="PTHR24393:SF34">
    <property type="entry name" value="PR_SET DOMAIN 13"/>
    <property type="match status" value="1"/>
</dbReference>
<dbReference type="PANTHER" id="PTHR24393">
    <property type="entry name" value="ZINC FINGER PROTEIN"/>
    <property type="match status" value="1"/>
</dbReference>
<dbReference type="Pfam" id="PF00096">
    <property type="entry name" value="zf-C2H2"/>
    <property type="match status" value="1"/>
</dbReference>
<dbReference type="SMART" id="SM00355">
    <property type="entry name" value="ZnF_C2H2"/>
    <property type="match status" value="9"/>
</dbReference>
<dbReference type="SUPFAM" id="SSF57667">
    <property type="entry name" value="beta-beta-alpha zinc fingers"/>
    <property type="match status" value="3"/>
</dbReference>
<dbReference type="PROSITE" id="PS00028">
    <property type="entry name" value="ZINC_FINGER_C2H2_1"/>
    <property type="match status" value="4"/>
</dbReference>
<dbReference type="PROSITE" id="PS50157">
    <property type="entry name" value="ZINC_FINGER_C2H2_2"/>
    <property type="match status" value="5"/>
</dbReference>
<comment type="function">
    <text evidence="1">Binds DNA and may function as a transcriptional repressor.</text>
</comment>
<comment type="subunit">
    <text evidence="1">Interacts with CTNNA2.</text>
</comment>
<comment type="subcellular location">
    <subcellularLocation>
        <location evidence="1">Nucleus</location>
    </subcellularLocation>
</comment>
<comment type="similarity">
    <text evidence="5">Belongs to the krueppel C2H2-type zinc-finger protein family.</text>
</comment>
<feature type="chain" id="PRO_0000383574" description="Zinc finger protein 639">
    <location>
        <begin position="1"/>
        <end position="485"/>
    </location>
</feature>
<feature type="zinc finger region" description="C2H2-type 1" evidence="3">
    <location>
        <begin position="204"/>
        <end position="227"/>
    </location>
</feature>
<feature type="zinc finger region" description="C2H2-type 2" evidence="3">
    <location>
        <begin position="233"/>
        <end position="255"/>
    </location>
</feature>
<feature type="zinc finger region" description="C2H2-type 3" evidence="3">
    <location>
        <begin position="260"/>
        <end position="283"/>
    </location>
</feature>
<feature type="zinc finger region" description="C2H2-type 4" evidence="3">
    <location>
        <begin position="289"/>
        <end position="311"/>
    </location>
</feature>
<feature type="zinc finger region" description="C2H2-type 5" evidence="3">
    <location>
        <begin position="374"/>
        <end position="397"/>
    </location>
</feature>
<feature type="zinc finger region" description="C2H2-type 6" evidence="3">
    <location>
        <begin position="403"/>
        <end position="425"/>
    </location>
</feature>
<feature type="zinc finger region" description="C2H2-type 7" evidence="3">
    <location>
        <begin position="431"/>
        <end position="454"/>
    </location>
</feature>
<feature type="zinc finger region" description="C2H2-type 8" evidence="3">
    <location>
        <begin position="460"/>
        <end position="482"/>
    </location>
</feature>
<feature type="region of interest" description="Disordered" evidence="4">
    <location>
        <begin position="1"/>
        <end position="23"/>
    </location>
</feature>
<feature type="region of interest" description="Disordered" evidence="4">
    <location>
        <begin position="54"/>
        <end position="82"/>
    </location>
</feature>
<feature type="region of interest" description="Interaction with CTNNA2" evidence="1">
    <location>
        <begin position="371"/>
        <end position="455"/>
    </location>
</feature>
<feature type="compositionally biased region" description="Basic residues" evidence="4">
    <location>
        <begin position="1"/>
        <end position="14"/>
    </location>
</feature>
<feature type="modified residue" description="Phosphoserine" evidence="6">
    <location>
        <position position="60"/>
    </location>
</feature>
<feature type="modified residue" description="Phosphoserine" evidence="2">
    <location>
        <position position="88"/>
    </location>
</feature>
<feature type="cross-link" description="Glycyl lysine isopeptide (Lys-Gly) (interchain with G-Cter in SUMO2)" evidence="2">
    <location>
        <position position="76"/>
    </location>
</feature>
<feature type="cross-link" description="Glycyl lysine isopeptide (Lys-Gly) (interchain with G-Cter in SUMO2)" evidence="2">
    <location>
        <position position="177"/>
    </location>
</feature>
<feature type="cross-link" description="Glycyl lysine isopeptide (Lys-Gly) (interchain with G-Cter in SUMO2)" evidence="2">
    <location>
        <position position="181"/>
    </location>
</feature>
<feature type="cross-link" description="Glycyl lysine isopeptide (Lys-Gly) (interchain with G-Cter in SUMO2)" evidence="2">
    <location>
        <position position="226"/>
    </location>
</feature>
<name>ZN639_RAT</name>
<evidence type="ECO:0000250" key="1"/>
<evidence type="ECO:0000250" key="2">
    <source>
        <dbReference type="UniProtKB" id="Q9UID6"/>
    </source>
</evidence>
<evidence type="ECO:0000255" key="3">
    <source>
        <dbReference type="PROSITE-ProRule" id="PRU00042"/>
    </source>
</evidence>
<evidence type="ECO:0000256" key="4">
    <source>
        <dbReference type="SAM" id="MobiDB-lite"/>
    </source>
</evidence>
<evidence type="ECO:0000305" key="5"/>
<evidence type="ECO:0007744" key="6">
    <source>
    </source>
</evidence>
<sequence>MSEYPKKRKRKTLHPSRYSDSSGISRIADGVSGIFSDHCYSVCSMRQPDLKYFDNKDDDSDPETANDLPKFTDGTKARSRSQSCLVPSPVLRILEHTVFSTEKPADVEICDEECGSPESGHQHTHEESPIEVHTSEDVPIAVEVHAISEDYDIEAENNSSESLLDQTDEEPPAKLCKILDKSQASNVTAQQKWPLLRANSSGLYKCELCEFNSKYFSDLKQHVILKHKRTDSNVCRVCKESFSTNMLLIEHAKLHEEDPYICKYCDYKTVIFENLSQHIADTHFSDHLYWCEQCDVQFSSSSELYLHFQEHSRDEQYLCQFCEHETGDPEDLHSHVVNEHARRLIELSDKCGSGGHGQCSLLSKITFDKCKNFFVCQVCGFRSRLHTNVNRHVAIEHTKIFPHVCDDCGKGFSSMLEYCKHLNSHLSEGIYLCQYCEYSTGQIEDLKIHLDFKHSADLPHKCSDCLMRFGNERELISHLPVHETT</sequence>
<organism>
    <name type="scientific">Rattus norvegicus</name>
    <name type="common">Rat</name>
    <dbReference type="NCBI Taxonomy" id="10116"/>
    <lineage>
        <taxon>Eukaryota</taxon>
        <taxon>Metazoa</taxon>
        <taxon>Chordata</taxon>
        <taxon>Craniata</taxon>
        <taxon>Vertebrata</taxon>
        <taxon>Euteleostomi</taxon>
        <taxon>Mammalia</taxon>
        <taxon>Eutheria</taxon>
        <taxon>Euarchontoglires</taxon>
        <taxon>Glires</taxon>
        <taxon>Rodentia</taxon>
        <taxon>Myomorpha</taxon>
        <taxon>Muroidea</taxon>
        <taxon>Muridae</taxon>
        <taxon>Murinae</taxon>
        <taxon>Rattus</taxon>
    </lineage>
</organism>
<gene>
    <name type="primary">Znf639</name>
</gene>
<reference key="1">
    <citation type="journal article" date="2004" name="Genome Res.">
        <title>The status, quality, and expansion of the NIH full-length cDNA project: the Mammalian Gene Collection (MGC).</title>
        <authorList>
            <consortium name="The MGC Project Team"/>
        </authorList>
    </citation>
    <scope>NUCLEOTIDE SEQUENCE [LARGE SCALE MRNA]</scope>
    <source>
        <tissue>Brain</tissue>
    </source>
</reference>
<reference key="2">
    <citation type="journal article" date="2012" name="Nat. Commun.">
        <title>Quantitative maps of protein phosphorylation sites across 14 different rat organs and tissues.</title>
        <authorList>
            <person name="Lundby A."/>
            <person name="Secher A."/>
            <person name="Lage K."/>
            <person name="Nordsborg N.B."/>
            <person name="Dmytriyev A."/>
            <person name="Lundby C."/>
            <person name="Olsen J.V."/>
        </authorList>
    </citation>
    <scope>PHOSPHORYLATION [LARGE SCALE ANALYSIS] AT SER-60</scope>
    <scope>IDENTIFICATION BY MASS SPECTROMETRY [LARGE SCALE ANALYSIS]</scope>
</reference>
<accession>Q5PPG4</accession>
<proteinExistence type="evidence at protein level"/>